<sequence length="996" mass="110028">MSLSNLSSSNSNGAFLDYGEFRSGVYIQTSNQILYFTDENGNKVGYQWKGLLPHTTTTNDPSTDGGISDTAWCSIVGSGFIEKLSKEGIDLSWKAHLPTVEVSYNLPHKSLKIWEEGTNSTDNDYWLYPGDGTVWNGIGVLGDIPDAPFKQIVPQNNVIEWSAIATEGQNQFTVPYEFTNISVFINGLLQNKSTGGYVVNGSTVTLNGSLKAGDDIHVVISNIPIKNINYITDVELSQPDAAQKIGLLHGGNIQNLQNFLSFDMFNIDKTGSTDVTSQINNIFSLANQLNIPIKQHDGTYLVSGSTIFTINTDCDLSGVTILPSSNFTGYFLYTQNEQPTTYNSSSSLVTLINSATINANDSILYGLINDTTLDGNAIFMKGNDPLYVARGTTKNWWCNTRISNRGKMDDYLKYGVSGINEVISLPISKKVTTIKLPNWDFINQPANNGVIRFNNISRYRIHGGSVFNRPLNDINKDPVIISINYAYDIILQDFYDEYPSWPLVGGSIAYAYTINFNYINRVTFKDINSQGYGWGIVGGQLATNITYLRCNINRVDMHDPFMGYLKILDCDLGYYGVSATGMGDMYIERTTFNIDDLAFNGWREVDGIINTRPDFGGWFDGGVYIKDITIIGDASKFREINNRGVSLFSAYSYNATLSYIPNGSPVEPWGFKEIIVNGLRCTKPITGKRFSSLVYAASVQNVDYFPRHVKFNNCDFNSSDVECIDLHGWKITPDNSSKTSISNTMNFKSTNFIEFTDCSFVGLEILRPYSSYDYMNLELKLNNCKYIGSNISPISFYTDQVGNYEFTNCDINFISDTTKSTSSLSNRQSSFVINGGQINSVSVPFSILYNSGYSTPVLVNNTIFKGSFSQSSVTSINLNVAEFAQLSNCRFYSNVNNSYISPALWLGSTSNSATSITVMRGNKINTVITNTTTVSGISIKTDIIPFGVASGHINGSFYVDATGTTGTYQLYLNSLNLKSQIGKIVSNGTISGIYLQ</sequence>
<accession>A0A0A8JBR2</accession>
<evidence type="ECO:0000269" key="1">
    <source>
    </source>
</evidence>
<evidence type="ECO:0000305" key="2"/>
<evidence type="ECO:0000305" key="3">
    <source>
    </source>
</evidence>
<organismHost>
    <name type="scientific">Klebsiella</name>
    <dbReference type="NCBI Taxonomy" id="570"/>
</organismHost>
<feature type="chain" id="PRO_0000458695" description="Depolymerase, capsule K64-specific">
    <location>
        <begin position="1"/>
        <end position="996"/>
    </location>
</feature>
<protein>
    <recommendedName>
        <fullName evidence="2">Depolymerase, capsule K64-specific</fullName>
    </recommendedName>
    <alternativeName>
        <fullName evidence="2">Probable tail fiber protein</fullName>
    </alternativeName>
</protein>
<organism>
    <name type="scientific">Klebsiella phage K64-1</name>
    <name type="common">Bacteriophage K64-1</name>
    <dbReference type="NCBI Taxonomy" id="1439894"/>
    <lineage>
        <taxon>Viruses</taxon>
        <taxon>Duplodnaviria</taxon>
        <taxon>Heunggongvirae</taxon>
        <taxon>Uroviricota</taxon>
        <taxon>Caudoviricetes</taxon>
        <taxon>Alcyoneusvirus</taxon>
        <taxon>Alcyoneusvirus K641</taxon>
    </lineage>
</organism>
<proteinExistence type="predicted"/>
<comment type="function">
    <text evidence="1 3">Functions as a receptor binding protein (RBP) and probably mediates the attachment to the host capsular exopolysaccharides (Probable). Displays a depolymerase activity that specifically degrades the K64-type polysaccharides of Klebsiella pneumoniae capsule (PubMed:28077636).</text>
</comment>
<comment type="subcellular location">
    <subcellularLocation>
        <location evidence="2">Virion</location>
    </subcellularLocation>
    <text evidence="2">Tail appendage.</text>
</comment>
<gene>
    <name evidence="2" type="primary">S2-5</name>
</gene>
<reference key="1">
    <citation type="journal article" date="2014" name="Antimicrob. Agents Chemother.">
        <title>Identification of capsular types in carbapenem-resistant Klebsiella pneumoniae strains by wzc sequencing and implications in capsule depolymerase treatment.</title>
        <authorList>
            <person name="Pan Y.-J."/>
            <person name="Lin T.-L."/>
            <person name="Lin Y.-T."/>
            <person name="Su P.-A."/>
            <person name="Chen C.-T."/>
            <person name="Hsieh P.-F."/>
            <person name="Hsu C.-R."/>
            <person name="Chen C.-C."/>
            <person name="Hsieh Y.-C."/>
            <person name="Wang J.-T."/>
        </authorList>
    </citation>
    <scope>NUCLEOTIDE SEQUENCE [LARGE SCALE GENOMIC DNA]</scope>
</reference>
<reference key="2">
    <citation type="journal article" date="2017" name="J. Virol.">
        <title>Klebsiella Phage PhiK64-1 Encodes Multiple Depolymerases for Multiple Host Capsular Types.</title>
        <authorList>
            <person name="Pan Y.-J."/>
            <person name="Lin T.-L."/>
            <person name="Chen C.-C."/>
            <person name="Tsai Y.-T."/>
            <person name="Cheng Y.-H."/>
            <person name="Chen Y.-Y."/>
            <person name="Hsieh P.-F."/>
            <person name="Lin Y.-T."/>
            <person name="Wang J.-T."/>
        </authorList>
    </citation>
    <scope>NUCLEOTIDE SEQUENCE [GENOMIC DNA]</scope>
    <scope>FUNCTION</scope>
</reference>
<reference key="3">
    <citation type="journal article" date="2019" name="Front. Microbiol.">
        <title>Modeling the Architecture of Depolymerase-Containing Receptor Binding Proteins in Klebsiella Phages.</title>
        <authorList>
            <person name="Latka A."/>
            <person name="Leiman P.G."/>
            <person name="Drulis-Kawa Z."/>
            <person name="Briers Y."/>
        </authorList>
    </citation>
    <scope>REVIEW</scope>
</reference>
<keyword id="KW-1238">Degradation of host capsule during virus entry</keyword>
<keyword id="KW-1235">Degradation of host cell envelope components during virus entry</keyword>
<keyword id="KW-0945">Host-virus interaction</keyword>
<keyword id="KW-1185">Reference proteome</keyword>
<keyword id="KW-1233">Viral attachment to host adhesion receptor</keyword>
<keyword id="KW-1161">Viral attachment to host cell</keyword>
<keyword id="KW-0946">Virion</keyword>
<keyword id="KW-1160">Virus entry into host cell</keyword>
<dbReference type="EMBL" id="AB897513">
    <property type="protein sequence ID" value="BAQ02780.1"/>
    <property type="molecule type" value="Genomic_DNA"/>
</dbReference>
<dbReference type="EMBL" id="AB897757">
    <property type="protein sequence ID" value="BAQ02842.1"/>
    <property type="molecule type" value="Genomic_DNA"/>
</dbReference>
<dbReference type="RefSeq" id="YP_009153202.1">
    <property type="nucleotide sequence ID" value="NC_027399.1"/>
</dbReference>
<dbReference type="SMR" id="A0A0A8JBR2"/>
<dbReference type="OrthoDB" id="30177at10239"/>
<dbReference type="Proteomes" id="UP000202478">
    <property type="component" value="Genome"/>
</dbReference>
<dbReference type="GO" id="GO:0044423">
    <property type="term" value="C:virion component"/>
    <property type="evidence" value="ECO:0007669"/>
    <property type="project" value="UniProtKB-KW"/>
</dbReference>
<dbReference type="GO" id="GO:0098671">
    <property type="term" value="P:adhesion receptor-mediated virion attachment to host cell"/>
    <property type="evidence" value="ECO:0007669"/>
    <property type="project" value="UniProtKB-KW"/>
</dbReference>
<dbReference type="GO" id="GO:0098994">
    <property type="term" value="P:symbiont entry into host cell via disruption of host cell envelope"/>
    <property type="evidence" value="ECO:0007669"/>
    <property type="project" value="UniProtKB-KW"/>
</dbReference>
<dbReference type="GO" id="GO:0098996">
    <property type="term" value="P:symbiont entry into host cell via disruption of host cell glycocalyx"/>
    <property type="evidence" value="ECO:0000314"/>
    <property type="project" value="UniProtKB"/>
</dbReference>
<dbReference type="Gene3D" id="2.10.10.80">
    <property type="match status" value="1"/>
</dbReference>
<name>DPO25_BPK64</name>